<feature type="chain" id="PRO_1000214713" description="Large ribosomal subunit protein uL15">
    <location>
        <begin position="1"/>
        <end position="145"/>
    </location>
</feature>
<feature type="region of interest" description="Disordered" evidence="2">
    <location>
        <begin position="1"/>
        <end position="57"/>
    </location>
</feature>
<feature type="compositionally biased region" description="Gly residues" evidence="2">
    <location>
        <begin position="21"/>
        <end position="31"/>
    </location>
</feature>
<gene>
    <name evidence="1" type="primary">rplO</name>
    <name type="ordered locus">PFLU_5508</name>
</gene>
<comment type="function">
    <text evidence="1">Binds to the 23S rRNA.</text>
</comment>
<comment type="subunit">
    <text evidence="1">Part of the 50S ribosomal subunit.</text>
</comment>
<comment type="similarity">
    <text evidence="1">Belongs to the universal ribosomal protein uL15 family.</text>
</comment>
<proteinExistence type="inferred from homology"/>
<dbReference type="EMBL" id="AM181176">
    <property type="protein sequence ID" value="CAY52733.1"/>
    <property type="molecule type" value="Genomic_DNA"/>
</dbReference>
<dbReference type="RefSeq" id="WP_003176407.1">
    <property type="nucleotide sequence ID" value="NC_012660.1"/>
</dbReference>
<dbReference type="SMR" id="C3K2V7"/>
<dbReference type="STRING" id="294.SRM1_05160"/>
<dbReference type="GeneID" id="97827715"/>
<dbReference type="eggNOG" id="COG0200">
    <property type="taxonomic scope" value="Bacteria"/>
</dbReference>
<dbReference type="HOGENOM" id="CLU_055188_4_2_6"/>
<dbReference type="OrthoDB" id="9810293at2"/>
<dbReference type="GO" id="GO:0022625">
    <property type="term" value="C:cytosolic large ribosomal subunit"/>
    <property type="evidence" value="ECO:0007669"/>
    <property type="project" value="TreeGrafter"/>
</dbReference>
<dbReference type="GO" id="GO:0019843">
    <property type="term" value="F:rRNA binding"/>
    <property type="evidence" value="ECO:0007669"/>
    <property type="project" value="UniProtKB-UniRule"/>
</dbReference>
<dbReference type="GO" id="GO:0003735">
    <property type="term" value="F:structural constituent of ribosome"/>
    <property type="evidence" value="ECO:0007669"/>
    <property type="project" value="InterPro"/>
</dbReference>
<dbReference type="GO" id="GO:0006412">
    <property type="term" value="P:translation"/>
    <property type="evidence" value="ECO:0007669"/>
    <property type="project" value="UniProtKB-UniRule"/>
</dbReference>
<dbReference type="Gene3D" id="3.100.10.10">
    <property type="match status" value="1"/>
</dbReference>
<dbReference type="HAMAP" id="MF_01341">
    <property type="entry name" value="Ribosomal_uL15"/>
    <property type="match status" value="1"/>
</dbReference>
<dbReference type="InterPro" id="IPR030878">
    <property type="entry name" value="Ribosomal_uL15"/>
</dbReference>
<dbReference type="InterPro" id="IPR021131">
    <property type="entry name" value="Ribosomal_uL15/eL18"/>
</dbReference>
<dbReference type="InterPro" id="IPR036227">
    <property type="entry name" value="Ribosomal_uL15/eL18_sf"/>
</dbReference>
<dbReference type="InterPro" id="IPR005749">
    <property type="entry name" value="Ribosomal_uL15_bac-type"/>
</dbReference>
<dbReference type="NCBIfam" id="TIGR01071">
    <property type="entry name" value="rplO_bact"/>
    <property type="match status" value="1"/>
</dbReference>
<dbReference type="PANTHER" id="PTHR12934">
    <property type="entry name" value="50S RIBOSOMAL PROTEIN L15"/>
    <property type="match status" value="1"/>
</dbReference>
<dbReference type="PANTHER" id="PTHR12934:SF11">
    <property type="entry name" value="LARGE RIBOSOMAL SUBUNIT PROTEIN UL15M"/>
    <property type="match status" value="1"/>
</dbReference>
<dbReference type="Pfam" id="PF00828">
    <property type="entry name" value="Ribosomal_L27A"/>
    <property type="match status" value="1"/>
</dbReference>
<dbReference type="SUPFAM" id="SSF52080">
    <property type="entry name" value="Ribosomal proteins L15p and L18e"/>
    <property type="match status" value="1"/>
</dbReference>
<sequence>MKLNDLSPAPGSRREKHRPGRGIGSGLGKTGGRGHKGQTSRSGGTIAPGFEGGQQPLHRRLPKFGFVSLKAMDRAEVRLSELAKVEGDIVTVQTLKDANVINVNVQRVKIMLSGEVTRAVTIGKGIGATKGARSAIEAAGGKFEE</sequence>
<evidence type="ECO:0000255" key="1">
    <source>
        <dbReference type="HAMAP-Rule" id="MF_01341"/>
    </source>
</evidence>
<evidence type="ECO:0000256" key="2">
    <source>
        <dbReference type="SAM" id="MobiDB-lite"/>
    </source>
</evidence>
<evidence type="ECO:0000305" key="3"/>
<accession>C3K2V7</accession>
<organism>
    <name type="scientific">Pseudomonas fluorescens (strain SBW25)</name>
    <dbReference type="NCBI Taxonomy" id="216595"/>
    <lineage>
        <taxon>Bacteria</taxon>
        <taxon>Pseudomonadati</taxon>
        <taxon>Pseudomonadota</taxon>
        <taxon>Gammaproteobacteria</taxon>
        <taxon>Pseudomonadales</taxon>
        <taxon>Pseudomonadaceae</taxon>
        <taxon>Pseudomonas</taxon>
    </lineage>
</organism>
<keyword id="KW-0687">Ribonucleoprotein</keyword>
<keyword id="KW-0689">Ribosomal protein</keyword>
<keyword id="KW-0694">RNA-binding</keyword>
<keyword id="KW-0699">rRNA-binding</keyword>
<protein>
    <recommendedName>
        <fullName evidence="1">Large ribosomal subunit protein uL15</fullName>
    </recommendedName>
    <alternativeName>
        <fullName evidence="3">50S ribosomal protein L15</fullName>
    </alternativeName>
</protein>
<name>RL15_PSEFS</name>
<reference key="1">
    <citation type="journal article" date="2009" name="Genome Biol.">
        <title>Genomic and genetic analyses of diversity and plant interactions of Pseudomonas fluorescens.</title>
        <authorList>
            <person name="Silby M.W."/>
            <person name="Cerdeno-Tarraga A.M."/>
            <person name="Vernikos G.S."/>
            <person name="Giddens S.R."/>
            <person name="Jackson R.W."/>
            <person name="Preston G.M."/>
            <person name="Zhang X.-X."/>
            <person name="Moon C.D."/>
            <person name="Gehrig S.M."/>
            <person name="Godfrey S.A.C."/>
            <person name="Knight C.G."/>
            <person name="Malone J.G."/>
            <person name="Robinson Z."/>
            <person name="Spiers A.J."/>
            <person name="Harris S."/>
            <person name="Challis G.L."/>
            <person name="Yaxley A.M."/>
            <person name="Harris D."/>
            <person name="Seeger K."/>
            <person name="Murphy L."/>
            <person name="Rutter S."/>
            <person name="Squares R."/>
            <person name="Quail M.A."/>
            <person name="Saunders E."/>
            <person name="Mavromatis K."/>
            <person name="Brettin T.S."/>
            <person name="Bentley S.D."/>
            <person name="Hothersall J."/>
            <person name="Stephens E."/>
            <person name="Thomas C.M."/>
            <person name="Parkhill J."/>
            <person name="Levy S.B."/>
            <person name="Rainey P.B."/>
            <person name="Thomson N.R."/>
        </authorList>
    </citation>
    <scope>NUCLEOTIDE SEQUENCE [LARGE SCALE GENOMIC DNA]</scope>
    <source>
        <strain>SBW25</strain>
    </source>
</reference>